<keyword id="KW-0067">ATP-binding</keyword>
<keyword id="KW-0968">Cytoplasmic vesicle</keyword>
<keyword id="KW-0967">Endosome</keyword>
<keyword id="KW-0418">Kinase</keyword>
<keyword id="KW-0547">Nucleotide-binding</keyword>
<keyword id="KW-0597">Phosphoprotein</keyword>
<keyword id="KW-1185">Reference proteome</keyword>
<keyword id="KW-0723">Serine/threonine-protein kinase</keyword>
<keyword id="KW-0808">Transferase</keyword>
<protein>
    <recommendedName>
        <fullName>Serine/threonine-protein kinase Sgk3</fullName>
        <ecNumber>2.7.11.1</ecNumber>
    </recommendedName>
    <alternativeName>
        <fullName>Cytokine-independent survival kinase</fullName>
    </alternativeName>
    <alternativeName>
        <fullName>Serum/glucocorticoid-regulated kinase 3</fullName>
    </alternativeName>
    <alternativeName>
        <fullName>Serum/glucocorticoid-regulated kinase-like</fullName>
    </alternativeName>
</protein>
<proteinExistence type="evidence at protein level"/>
<gene>
    <name type="primary">Sgk3</name>
    <name type="synonym">Cisk</name>
    <name type="synonym">Sgkl</name>
</gene>
<accession>Q8R4V0</accession>
<dbReference type="EC" id="2.7.11.1"/>
<dbReference type="EMBL" id="AABR03002244">
    <property type="status" value="NOT_ANNOTATED_CDS"/>
    <property type="molecule type" value="Genomic_DNA"/>
</dbReference>
<dbReference type="EMBL" id="AF361755">
    <property type="protein sequence ID" value="AAL91350.1"/>
    <property type="molecule type" value="mRNA"/>
</dbReference>
<dbReference type="SMR" id="Q8R4V0"/>
<dbReference type="FunCoup" id="Q8R4V0">
    <property type="interactions" value="1218"/>
</dbReference>
<dbReference type="STRING" id="10116.ENSRNOP00000064540"/>
<dbReference type="iPTMnet" id="Q8R4V0"/>
<dbReference type="PhosphoSitePlus" id="Q8R4V0"/>
<dbReference type="PaxDb" id="10116-ENSRNOP00000064540"/>
<dbReference type="AGR" id="RGD:620242"/>
<dbReference type="RGD" id="620242">
    <property type="gene designation" value="Sgk3"/>
</dbReference>
<dbReference type="eggNOG" id="KOG0598">
    <property type="taxonomic scope" value="Eukaryota"/>
</dbReference>
<dbReference type="eggNOG" id="KOG2101">
    <property type="taxonomic scope" value="Eukaryota"/>
</dbReference>
<dbReference type="InParanoid" id="Q8R4V0"/>
<dbReference type="OrthoDB" id="63267at2759"/>
<dbReference type="PhylomeDB" id="Q8R4V0"/>
<dbReference type="Reactome" id="R-RNO-2672351">
    <property type="pathway name" value="Stimuli-sensing channels"/>
</dbReference>
<dbReference type="PRO" id="PR:Q8R4V0"/>
<dbReference type="Proteomes" id="UP000002494">
    <property type="component" value="Unplaced"/>
</dbReference>
<dbReference type="GO" id="GO:0031410">
    <property type="term" value="C:cytoplasmic vesicle"/>
    <property type="evidence" value="ECO:0000266"/>
    <property type="project" value="RGD"/>
</dbReference>
<dbReference type="GO" id="GO:0005769">
    <property type="term" value="C:early endosome"/>
    <property type="evidence" value="ECO:0007669"/>
    <property type="project" value="UniProtKB-SubCell"/>
</dbReference>
<dbReference type="GO" id="GO:0055037">
    <property type="term" value="C:recycling endosome"/>
    <property type="evidence" value="ECO:0007669"/>
    <property type="project" value="UniProtKB-SubCell"/>
</dbReference>
<dbReference type="GO" id="GO:0005524">
    <property type="term" value="F:ATP binding"/>
    <property type="evidence" value="ECO:0007669"/>
    <property type="project" value="UniProtKB-KW"/>
</dbReference>
<dbReference type="GO" id="GO:0060090">
    <property type="term" value="F:molecular adaptor activity"/>
    <property type="evidence" value="ECO:0000266"/>
    <property type="project" value="RGD"/>
</dbReference>
<dbReference type="GO" id="GO:0035091">
    <property type="term" value="F:phosphatidylinositol binding"/>
    <property type="evidence" value="ECO:0007669"/>
    <property type="project" value="InterPro"/>
</dbReference>
<dbReference type="GO" id="GO:0015459">
    <property type="term" value="F:potassium channel regulator activity"/>
    <property type="evidence" value="ECO:0000318"/>
    <property type="project" value="GO_Central"/>
</dbReference>
<dbReference type="GO" id="GO:0106310">
    <property type="term" value="F:protein serine kinase activity"/>
    <property type="evidence" value="ECO:0007669"/>
    <property type="project" value="RHEA"/>
</dbReference>
<dbReference type="GO" id="GO:0004674">
    <property type="term" value="F:protein serine/threonine kinase activity"/>
    <property type="evidence" value="ECO:0000266"/>
    <property type="project" value="RGD"/>
</dbReference>
<dbReference type="GO" id="GO:0035556">
    <property type="term" value="P:intracellular signal transduction"/>
    <property type="evidence" value="ECO:0000318"/>
    <property type="project" value="GO_Central"/>
</dbReference>
<dbReference type="GO" id="GO:2001240">
    <property type="term" value="P:negative regulation of extrinsic apoptotic signaling pathway in absence of ligand"/>
    <property type="evidence" value="ECO:0000266"/>
    <property type="project" value="RGD"/>
</dbReference>
<dbReference type="CDD" id="cd06870">
    <property type="entry name" value="PX_CISK"/>
    <property type="match status" value="1"/>
</dbReference>
<dbReference type="CDD" id="cd05604">
    <property type="entry name" value="STKc_SGK3"/>
    <property type="match status" value="1"/>
</dbReference>
<dbReference type="FunFam" id="1.10.510.10:FF:000065">
    <property type="entry name" value="Non-specific serine/threonine protein kinase"/>
    <property type="match status" value="1"/>
</dbReference>
<dbReference type="FunFam" id="3.30.1520.10:FF:000018">
    <property type="entry name" value="Non-specific serine/threonine protein kinase"/>
    <property type="match status" value="1"/>
</dbReference>
<dbReference type="FunFam" id="3.30.200.20:FF:000030">
    <property type="entry name" value="Non-specific serine/threonine protein kinase"/>
    <property type="match status" value="1"/>
</dbReference>
<dbReference type="Gene3D" id="3.30.200.20">
    <property type="entry name" value="Phosphorylase Kinase, domain 1"/>
    <property type="match status" value="1"/>
</dbReference>
<dbReference type="Gene3D" id="3.30.1520.10">
    <property type="entry name" value="Phox-like domain"/>
    <property type="match status" value="1"/>
</dbReference>
<dbReference type="Gene3D" id="1.10.510.10">
    <property type="entry name" value="Transferase(Phosphotransferase) domain 1"/>
    <property type="match status" value="1"/>
</dbReference>
<dbReference type="InterPro" id="IPR000961">
    <property type="entry name" value="AGC-kinase_C"/>
</dbReference>
<dbReference type="InterPro" id="IPR037900">
    <property type="entry name" value="CISK_PX"/>
</dbReference>
<dbReference type="InterPro" id="IPR011009">
    <property type="entry name" value="Kinase-like_dom_sf"/>
</dbReference>
<dbReference type="InterPro" id="IPR017892">
    <property type="entry name" value="Pkinase_C"/>
</dbReference>
<dbReference type="InterPro" id="IPR000719">
    <property type="entry name" value="Prot_kinase_dom"/>
</dbReference>
<dbReference type="InterPro" id="IPR017441">
    <property type="entry name" value="Protein_kinase_ATP_BS"/>
</dbReference>
<dbReference type="InterPro" id="IPR001683">
    <property type="entry name" value="PX_dom"/>
</dbReference>
<dbReference type="InterPro" id="IPR036871">
    <property type="entry name" value="PX_dom_sf"/>
</dbReference>
<dbReference type="InterPro" id="IPR008271">
    <property type="entry name" value="Ser/Thr_kinase_AS"/>
</dbReference>
<dbReference type="InterPro" id="IPR037709">
    <property type="entry name" value="SGK3_dom"/>
</dbReference>
<dbReference type="PANTHER" id="PTHR24351">
    <property type="entry name" value="RIBOSOMAL PROTEIN S6 KINASE"/>
    <property type="match status" value="1"/>
</dbReference>
<dbReference type="Pfam" id="PF00069">
    <property type="entry name" value="Pkinase"/>
    <property type="match status" value="1"/>
</dbReference>
<dbReference type="Pfam" id="PF00433">
    <property type="entry name" value="Pkinase_C"/>
    <property type="match status" value="1"/>
</dbReference>
<dbReference type="Pfam" id="PF00787">
    <property type="entry name" value="PX"/>
    <property type="match status" value="1"/>
</dbReference>
<dbReference type="SMART" id="SM00312">
    <property type="entry name" value="PX"/>
    <property type="match status" value="1"/>
</dbReference>
<dbReference type="SMART" id="SM00133">
    <property type="entry name" value="S_TK_X"/>
    <property type="match status" value="1"/>
</dbReference>
<dbReference type="SMART" id="SM00220">
    <property type="entry name" value="S_TKc"/>
    <property type="match status" value="1"/>
</dbReference>
<dbReference type="SUPFAM" id="SSF56112">
    <property type="entry name" value="Protein kinase-like (PK-like)"/>
    <property type="match status" value="1"/>
</dbReference>
<dbReference type="SUPFAM" id="SSF64268">
    <property type="entry name" value="PX domain"/>
    <property type="match status" value="1"/>
</dbReference>
<dbReference type="PROSITE" id="PS51285">
    <property type="entry name" value="AGC_KINASE_CTER"/>
    <property type="match status" value="1"/>
</dbReference>
<dbReference type="PROSITE" id="PS00107">
    <property type="entry name" value="PROTEIN_KINASE_ATP"/>
    <property type="match status" value="1"/>
</dbReference>
<dbReference type="PROSITE" id="PS50011">
    <property type="entry name" value="PROTEIN_KINASE_DOM"/>
    <property type="match status" value="1"/>
</dbReference>
<dbReference type="PROSITE" id="PS00108">
    <property type="entry name" value="PROTEIN_KINASE_ST"/>
    <property type="match status" value="1"/>
</dbReference>
<dbReference type="PROSITE" id="PS50195">
    <property type="entry name" value="PX"/>
    <property type="match status" value="1"/>
</dbReference>
<feature type="chain" id="PRO_0000263053" description="Serine/threonine-protein kinase Sgk3">
    <location>
        <begin position="1"/>
        <end position="496"/>
    </location>
</feature>
<feature type="domain" description="PX" evidence="4">
    <location>
        <begin position="12"/>
        <end position="124"/>
    </location>
</feature>
<feature type="domain" description="Protein kinase" evidence="5">
    <location>
        <begin position="162"/>
        <end position="464"/>
    </location>
</feature>
<feature type="domain" description="AGC-kinase C-terminal" evidence="6">
    <location>
        <begin position="420"/>
        <end position="496"/>
    </location>
</feature>
<feature type="region of interest" description="Disordered" evidence="8">
    <location>
        <begin position="121"/>
        <end position="157"/>
    </location>
</feature>
<feature type="short sequence motif" description="Nuclear localization signal" evidence="1">
    <location>
        <begin position="195"/>
        <end position="205"/>
    </location>
</feature>
<feature type="compositionally biased region" description="Polar residues" evidence="8">
    <location>
        <begin position="139"/>
        <end position="151"/>
    </location>
</feature>
<feature type="active site" description="Proton acceptor" evidence="5 7">
    <location>
        <position position="286"/>
    </location>
</feature>
<feature type="binding site" evidence="5">
    <location>
        <begin position="168"/>
        <end position="176"/>
    </location>
    <ligand>
        <name>ATP</name>
        <dbReference type="ChEBI" id="CHEBI:30616"/>
    </ligand>
</feature>
<feature type="binding site" evidence="5">
    <location>
        <position position="191"/>
    </location>
    <ligand>
        <name>ATP</name>
        <dbReference type="ChEBI" id="CHEBI:30616"/>
    </ligand>
</feature>
<feature type="modified residue" description="Phosphoserine" evidence="3">
    <location>
        <position position="126"/>
    </location>
</feature>
<feature type="modified residue" description="Phosphoserine" evidence="3">
    <location>
        <position position="129"/>
    </location>
</feature>
<feature type="modified residue" description="Phosphothreonine; by PDPK1" evidence="2">
    <location>
        <position position="320"/>
    </location>
</feature>
<feature type="modified residue" description="Phosphoserine" evidence="2">
    <location>
        <position position="486"/>
    </location>
</feature>
<evidence type="ECO:0000250" key="1"/>
<evidence type="ECO:0000250" key="2">
    <source>
        <dbReference type="UniProtKB" id="Q96BR1"/>
    </source>
</evidence>
<evidence type="ECO:0000250" key="3">
    <source>
        <dbReference type="UniProtKB" id="Q9ERE3"/>
    </source>
</evidence>
<evidence type="ECO:0000255" key="4">
    <source>
        <dbReference type="PROSITE-ProRule" id="PRU00147"/>
    </source>
</evidence>
<evidence type="ECO:0000255" key="5">
    <source>
        <dbReference type="PROSITE-ProRule" id="PRU00159"/>
    </source>
</evidence>
<evidence type="ECO:0000255" key="6">
    <source>
        <dbReference type="PROSITE-ProRule" id="PRU00618"/>
    </source>
</evidence>
<evidence type="ECO:0000255" key="7">
    <source>
        <dbReference type="PROSITE-ProRule" id="PRU10027"/>
    </source>
</evidence>
<evidence type="ECO:0000256" key="8">
    <source>
        <dbReference type="SAM" id="MobiDB-lite"/>
    </source>
</evidence>
<evidence type="ECO:0000269" key="9">
    <source>
    </source>
</evidence>
<evidence type="ECO:0000305" key="10"/>
<sequence length="496" mass="57171">MQRDCTMDYKESCPSVSIPSSDEHREKKKRFTVYKVLVSVGRSEWFVFRRYAEFDKLYNSLKKQFPAMALKIPAKRIFGDNFDPDFIKQRRAGLNEFIQNLVRYPELYNHPDVRAFLQMDSPRHQSDPSEDEDERSTPKPHSTSRNINLGPTGNPHAKPSDFDFLKVIGKGSFGKVLLAKRKLDGKFYAVKVLQKKIVLNRKEQKHIMAERNVLLKNVKHPFLVGLHYSFQTTEKLYFVLDFVNGGELFFHLQRERSFPEPRARFYAAEIASALGYLHSIKIVYRDLKPENILLDSMGHVVLTDFGLCKEGIAISDTTTTFCGTPEYLAPEVIRKQPYDRTVDWWCLGAVLYEMLYGLPPFYCRDVAEMYDNILHKPLNLRPGVSLTAWSILEELLEKNRQNRLGAKEDFLEIQNHPFFESLSWTDLVQKKIPPPFNPNVAGPDDIRNFDAVFTEETVPYSVCVSSDYSIVNASVLEADDAFVGFSYAPPSEDLFL</sequence>
<name>SGK3_RAT</name>
<organism>
    <name type="scientific">Rattus norvegicus</name>
    <name type="common">Rat</name>
    <dbReference type="NCBI Taxonomy" id="10116"/>
    <lineage>
        <taxon>Eukaryota</taxon>
        <taxon>Metazoa</taxon>
        <taxon>Chordata</taxon>
        <taxon>Craniata</taxon>
        <taxon>Vertebrata</taxon>
        <taxon>Euteleostomi</taxon>
        <taxon>Mammalia</taxon>
        <taxon>Eutheria</taxon>
        <taxon>Euarchontoglires</taxon>
        <taxon>Glires</taxon>
        <taxon>Rodentia</taxon>
        <taxon>Myomorpha</taxon>
        <taxon>Muroidea</taxon>
        <taxon>Muridae</taxon>
        <taxon>Murinae</taxon>
        <taxon>Rattus</taxon>
    </lineage>
</organism>
<reference key="1">
    <citation type="journal article" date="2004" name="Nature">
        <title>Genome sequence of the Brown Norway rat yields insights into mammalian evolution.</title>
        <authorList>
            <person name="Gibbs R.A."/>
            <person name="Weinstock G.M."/>
            <person name="Metzker M.L."/>
            <person name="Muzny D.M."/>
            <person name="Sodergren E.J."/>
            <person name="Scherer S."/>
            <person name="Scott G."/>
            <person name="Steffen D."/>
            <person name="Worley K.C."/>
            <person name="Burch P.E."/>
            <person name="Okwuonu G."/>
            <person name="Hines S."/>
            <person name="Lewis L."/>
            <person name="Deramo C."/>
            <person name="Delgado O."/>
            <person name="Dugan-Rocha S."/>
            <person name="Miner G."/>
            <person name="Morgan M."/>
            <person name="Hawes A."/>
            <person name="Gill R."/>
            <person name="Holt R.A."/>
            <person name="Adams M.D."/>
            <person name="Amanatides P.G."/>
            <person name="Baden-Tillson H."/>
            <person name="Barnstead M."/>
            <person name="Chin S."/>
            <person name="Evans C.A."/>
            <person name="Ferriera S."/>
            <person name="Fosler C."/>
            <person name="Glodek A."/>
            <person name="Gu Z."/>
            <person name="Jennings D."/>
            <person name="Kraft C.L."/>
            <person name="Nguyen T."/>
            <person name="Pfannkoch C.M."/>
            <person name="Sitter C."/>
            <person name="Sutton G.G."/>
            <person name="Venter J.C."/>
            <person name="Woodage T."/>
            <person name="Smith D."/>
            <person name="Lee H.-M."/>
            <person name="Gustafson E."/>
            <person name="Cahill P."/>
            <person name="Kana A."/>
            <person name="Doucette-Stamm L."/>
            <person name="Weinstock K."/>
            <person name="Fechtel K."/>
            <person name="Weiss R.B."/>
            <person name="Dunn D.M."/>
            <person name="Green E.D."/>
            <person name="Blakesley R.W."/>
            <person name="Bouffard G.G."/>
            <person name="De Jong P.J."/>
            <person name="Osoegawa K."/>
            <person name="Zhu B."/>
            <person name="Marra M."/>
            <person name="Schein J."/>
            <person name="Bosdet I."/>
            <person name="Fjell C."/>
            <person name="Jones S."/>
            <person name="Krzywinski M."/>
            <person name="Mathewson C."/>
            <person name="Siddiqui A."/>
            <person name="Wye N."/>
            <person name="McPherson J."/>
            <person name="Zhao S."/>
            <person name="Fraser C.M."/>
            <person name="Shetty J."/>
            <person name="Shatsman S."/>
            <person name="Geer K."/>
            <person name="Chen Y."/>
            <person name="Abramzon S."/>
            <person name="Nierman W.C."/>
            <person name="Havlak P.H."/>
            <person name="Chen R."/>
            <person name="Durbin K.J."/>
            <person name="Egan A."/>
            <person name="Ren Y."/>
            <person name="Song X.-Z."/>
            <person name="Li B."/>
            <person name="Liu Y."/>
            <person name="Qin X."/>
            <person name="Cawley S."/>
            <person name="Cooney A.J."/>
            <person name="D'Souza L.M."/>
            <person name="Martin K."/>
            <person name="Wu J.Q."/>
            <person name="Gonzalez-Garay M.L."/>
            <person name="Jackson A.R."/>
            <person name="Kalafus K.J."/>
            <person name="McLeod M.P."/>
            <person name="Milosavljevic A."/>
            <person name="Virk D."/>
            <person name="Volkov A."/>
            <person name="Wheeler D.A."/>
            <person name="Zhang Z."/>
            <person name="Bailey J.A."/>
            <person name="Eichler E.E."/>
            <person name="Tuzun E."/>
            <person name="Birney E."/>
            <person name="Mongin E."/>
            <person name="Ureta-Vidal A."/>
            <person name="Woodwark C."/>
            <person name="Zdobnov E."/>
            <person name="Bork P."/>
            <person name="Suyama M."/>
            <person name="Torrents D."/>
            <person name="Alexandersson M."/>
            <person name="Trask B.J."/>
            <person name="Young J.M."/>
            <person name="Huang H."/>
            <person name="Wang H."/>
            <person name="Xing H."/>
            <person name="Daniels S."/>
            <person name="Gietzen D."/>
            <person name="Schmidt J."/>
            <person name="Stevens K."/>
            <person name="Vitt U."/>
            <person name="Wingrove J."/>
            <person name="Camara F."/>
            <person name="Mar Alba M."/>
            <person name="Abril J.F."/>
            <person name="Guigo R."/>
            <person name="Smit A."/>
            <person name="Dubchak I."/>
            <person name="Rubin E.M."/>
            <person name="Couronne O."/>
            <person name="Poliakov A."/>
            <person name="Huebner N."/>
            <person name="Ganten D."/>
            <person name="Goesele C."/>
            <person name="Hummel O."/>
            <person name="Kreitler T."/>
            <person name="Lee Y.-A."/>
            <person name="Monti J."/>
            <person name="Schulz H."/>
            <person name="Zimdahl H."/>
            <person name="Himmelbauer H."/>
            <person name="Lehrach H."/>
            <person name="Jacob H.J."/>
            <person name="Bromberg S."/>
            <person name="Gullings-Handley J."/>
            <person name="Jensen-Seaman M.I."/>
            <person name="Kwitek A.E."/>
            <person name="Lazar J."/>
            <person name="Pasko D."/>
            <person name="Tonellato P.J."/>
            <person name="Twigger S."/>
            <person name="Ponting C.P."/>
            <person name="Duarte J.M."/>
            <person name="Rice S."/>
            <person name="Goodstadt L."/>
            <person name="Beatson S.A."/>
            <person name="Emes R.D."/>
            <person name="Winter E.E."/>
            <person name="Webber C."/>
            <person name="Brandt P."/>
            <person name="Nyakatura G."/>
            <person name="Adetobi M."/>
            <person name="Chiaromonte F."/>
            <person name="Elnitski L."/>
            <person name="Eswara P."/>
            <person name="Hardison R.C."/>
            <person name="Hou M."/>
            <person name="Kolbe D."/>
            <person name="Makova K."/>
            <person name="Miller W."/>
            <person name="Nekrutenko A."/>
            <person name="Riemer C."/>
            <person name="Schwartz S."/>
            <person name="Taylor J."/>
            <person name="Yang S."/>
            <person name="Zhang Y."/>
            <person name="Lindpaintner K."/>
            <person name="Andrews T.D."/>
            <person name="Caccamo M."/>
            <person name="Clamp M."/>
            <person name="Clarke L."/>
            <person name="Curwen V."/>
            <person name="Durbin R.M."/>
            <person name="Eyras E."/>
            <person name="Searle S.M."/>
            <person name="Cooper G.M."/>
            <person name="Batzoglou S."/>
            <person name="Brudno M."/>
            <person name="Sidow A."/>
            <person name="Stone E.A."/>
            <person name="Payseur B.A."/>
            <person name="Bourque G."/>
            <person name="Lopez-Otin C."/>
            <person name="Puente X.S."/>
            <person name="Chakrabarti K."/>
            <person name="Chatterji S."/>
            <person name="Dewey C."/>
            <person name="Pachter L."/>
            <person name="Bray N."/>
            <person name="Yap V.B."/>
            <person name="Caspi A."/>
            <person name="Tesler G."/>
            <person name="Pevzner P.A."/>
            <person name="Haussler D."/>
            <person name="Roskin K.M."/>
            <person name="Baertsch R."/>
            <person name="Clawson H."/>
            <person name="Furey T.S."/>
            <person name="Hinrichs A.S."/>
            <person name="Karolchik D."/>
            <person name="Kent W.J."/>
            <person name="Rosenbloom K.R."/>
            <person name="Trumbower H."/>
            <person name="Weirauch M."/>
            <person name="Cooper D.N."/>
            <person name="Stenson P.D."/>
            <person name="Ma B."/>
            <person name="Brent M."/>
            <person name="Arumugam M."/>
            <person name="Shteynberg D."/>
            <person name="Copley R.R."/>
            <person name="Taylor M.S."/>
            <person name="Riethman H."/>
            <person name="Mudunuri U."/>
            <person name="Peterson J."/>
            <person name="Guyer M."/>
            <person name="Felsenfeld A."/>
            <person name="Old S."/>
            <person name="Mockrin S."/>
            <person name="Collins F.S."/>
        </authorList>
    </citation>
    <scope>NUCLEOTIDE SEQUENCE [LARGE SCALE GENOMIC DNA]</scope>
    <source>
        <strain>Brown Norway</strain>
    </source>
</reference>
<reference key="2">
    <citation type="submission" date="2001-03" db="EMBL/GenBank/DDBJ databases">
        <title>SGK2 and SGK3 mRNA expression in rat kidney.</title>
        <authorList>
            <person name="Feng Y.X."/>
            <person name="Huber S.M."/>
            <person name="Waerntges S."/>
            <person name="Lang F."/>
        </authorList>
    </citation>
    <scope>NUCLEOTIDE SEQUENCE [MRNA] OF 20-279</scope>
    <source>
        <strain>Sprague-Dawley</strain>
    </source>
</reference>
<reference key="3">
    <citation type="journal article" date="2004" name="Biochem. Biophys. Res. Commun.">
        <title>Stimulation of the EAAT4 glutamate transporter by SGK protein kinase isoforms and PKB.</title>
        <authorList>
            <person name="Boehmer C."/>
            <person name="Philippin M."/>
            <person name="Rajamanickam J."/>
            <person name="Mack A."/>
            <person name="Broer S."/>
            <person name="Palmada M."/>
            <person name="Lang F."/>
        </authorList>
    </citation>
    <scope>FUNCTION IN THE REGULATION OF SLC1A6/EAAT4</scope>
</reference>
<comment type="function">
    <text evidence="1 9">Serine/threonine-protein kinase which is involved in the regulation of a wide variety of ion channels, membrane transporters, cell growth, proliferation, survival and migration. Up-regulates Na(+) channels: SCNN1A/ENAC and SCN5A, K(+) channels: KCNA3/KV1.3, KCNE1, KCNQ1 and KCNH2/HERG, epithelial Ca(2+) channels: TRPV5 and TRPV6, chloride channel: BSND, creatine transporter: SLC6A8, Na(+)/dicarboxylate cotransporter: SLC13A2/NADC1, Na(+)-dependent phosphate cotransporter: SLC34A2/NAPI-2B, amino acid transporters: SLC1A5/ASCT2 and SLC6A19, glutamate transporters: SLC1A3/EAAT1, SLC1A6/EAAT4 and SLC1A7/EAAT5, glutamate receptors: GRIA1/GLUR1 and GRIK2/GLUR6, Na(+)/H(+) exchanger: SLC9A3/NHE3, and the Na(+)/K(+) ATPase. Plays a role in the regulation of renal tubular phosphate transport and bone density. Phosphorylates NEDD4L and GSK3B. Positively regulates ER transcription activity through phosphorylation of FLII. Negatively regulates the function of ITCH/AIP4 via its phosphorylation and thereby prevents CXCR4 from being efficiently sorted to lysosomes (By similarity).</text>
</comment>
<comment type="catalytic activity">
    <reaction>
        <text>L-seryl-[protein] + ATP = O-phospho-L-seryl-[protein] + ADP + H(+)</text>
        <dbReference type="Rhea" id="RHEA:17989"/>
        <dbReference type="Rhea" id="RHEA-COMP:9863"/>
        <dbReference type="Rhea" id="RHEA-COMP:11604"/>
        <dbReference type="ChEBI" id="CHEBI:15378"/>
        <dbReference type="ChEBI" id="CHEBI:29999"/>
        <dbReference type="ChEBI" id="CHEBI:30616"/>
        <dbReference type="ChEBI" id="CHEBI:83421"/>
        <dbReference type="ChEBI" id="CHEBI:456216"/>
        <dbReference type="EC" id="2.7.11.1"/>
    </reaction>
</comment>
<comment type="catalytic activity">
    <reaction>
        <text>L-threonyl-[protein] + ATP = O-phospho-L-threonyl-[protein] + ADP + H(+)</text>
        <dbReference type="Rhea" id="RHEA:46608"/>
        <dbReference type="Rhea" id="RHEA-COMP:11060"/>
        <dbReference type="Rhea" id="RHEA-COMP:11605"/>
        <dbReference type="ChEBI" id="CHEBI:15378"/>
        <dbReference type="ChEBI" id="CHEBI:30013"/>
        <dbReference type="ChEBI" id="CHEBI:30616"/>
        <dbReference type="ChEBI" id="CHEBI:61977"/>
        <dbReference type="ChEBI" id="CHEBI:456216"/>
        <dbReference type="EC" id="2.7.11.1"/>
    </reaction>
</comment>
<comment type="activity regulation">
    <text>Two specific sites, one in the kinase domain (Thr-320) and the other in the C-terminal regulatory region (Ser-486), need to be phosphorylated for its full activation.</text>
</comment>
<comment type="subunit">
    <text evidence="1">Interacts with GSK3B and FLII. Interacts with PDPK1 in a phosphorylation-dependent manner.</text>
</comment>
<comment type="subcellular location">
    <subcellularLocation>
        <location evidence="1">Cytoplasmic vesicle</location>
    </subcellularLocation>
    <subcellularLocation>
        <location evidence="1">Early endosome</location>
    </subcellularLocation>
    <subcellularLocation>
        <location evidence="1">Recycling endosome</location>
    </subcellularLocation>
    <text evidence="1">Endosomal localization is a prerequisite for complete kinase activity. It is essential for its colocalization with the kinase responsible for phosphorylating Ser-486 thus allowing PDPK1 phosphorylation of Thr-320 resulting in complete activation of SGK3. Localized in vesicle-like structures and in the early endosome. Colocalizes with SLC9A3/NHE3 in the recycling endosomes (By similarity).</text>
</comment>
<comment type="PTM">
    <text evidence="1">Activated by phosphorylation on Ser-486 by an unknown kinase (may be mTORC2 but not confirmed), transforming it into a substrate for PDPK1 which then phosphorylates it on Thr-320.</text>
</comment>
<comment type="similarity">
    <text evidence="10">Belongs to the protein kinase superfamily. AGC Ser/Thr protein kinase family.</text>
</comment>